<feature type="chain" id="PRO_0000270405" description="Methionine import ATP-binding protein MetN 1">
    <location>
        <begin position="1"/>
        <end position="341"/>
    </location>
</feature>
<feature type="domain" description="ABC transporter" evidence="1">
    <location>
        <begin position="2"/>
        <end position="241"/>
    </location>
</feature>
<feature type="binding site" evidence="1">
    <location>
        <begin position="38"/>
        <end position="45"/>
    </location>
    <ligand>
        <name>ATP</name>
        <dbReference type="ChEBI" id="CHEBI:30616"/>
    </ligand>
</feature>
<gene>
    <name evidence="1" type="primary">metN1</name>
    <name type="ordered locus">SE_0600</name>
</gene>
<comment type="function">
    <text evidence="1">Part of the ABC transporter complex MetNIQ involved in methionine import. Responsible for energy coupling to the transport system.</text>
</comment>
<comment type="catalytic activity">
    <reaction evidence="1">
        <text>L-methionine(out) + ATP + H2O = L-methionine(in) + ADP + phosphate + H(+)</text>
        <dbReference type="Rhea" id="RHEA:29779"/>
        <dbReference type="ChEBI" id="CHEBI:15377"/>
        <dbReference type="ChEBI" id="CHEBI:15378"/>
        <dbReference type="ChEBI" id="CHEBI:30616"/>
        <dbReference type="ChEBI" id="CHEBI:43474"/>
        <dbReference type="ChEBI" id="CHEBI:57844"/>
        <dbReference type="ChEBI" id="CHEBI:456216"/>
        <dbReference type="EC" id="7.4.2.11"/>
    </reaction>
</comment>
<comment type="catalytic activity">
    <reaction evidence="1">
        <text>D-methionine(out) + ATP + H2O = D-methionine(in) + ADP + phosphate + H(+)</text>
        <dbReference type="Rhea" id="RHEA:29767"/>
        <dbReference type="ChEBI" id="CHEBI:15377"/>
        <dbReference type="ChEBI" id="CHEBI:15378"/>
        <dbReference type="ChEBI" id="CHEBI:30616"/>
        <dbReference type="ChEBI" id="CHEBI:43474"/>
        <dbReference type="ChEBI" id="CHEBI:57932"/>
        <dbReference type="ChEBI" id="CHEBI:456216"/>
        <dbReference type="EC" id="7.4.2.11"/>
    </reaction>
</comment>
<comment type="subunit">
    <text evidence="1">The complex is composed of two ATP-binding proteins (MetN), two transmembrane proteins (MetI) and a solute-binding protein (MetQ).</text>
</comment>
<comment type="subcellular location">
    <subcellularLocation>
        <location evidence="1">Cell membrane</location>
        <topology evidence="1">Peripheral membrane protein</topology>
    </subcellularLocation>
</comment>
<comment type="similarity">
    <text evidence="1">Belongs to the ABC transporter superfamily. Methionine importer (TC 3.A.1.24) family.</text>
</comment>
<protein>
    <recommendedName>
        <fullName evidence="1">Methionine import ATP-binding protein MetN 1</fullName>
        <ecNumber evidence="1">7.4.2.11</ecNumber>
    </recommendedName>
</protein>
<reference key="1">
    <citation type="journal article" date="2003" name="Mol. Microbiol.">
        <title>Genome-based analysis of virulence genes in a non-biofilm-forming Staphylococcus epidermidis strain (ATCC 12228).</title>
        <authorList>
            <person name="Zhang Y.-Q."/>
            <person name="Ren S.-X."/>
            <person name="Li H.-L."/>
            <person name="Wang Y.-X."/>
            <person name="Fu G."/>
            <person name="Yang J."/>
            <person name="Qin Z.-Q."/>
            <person name="Miao Y.-G."/>
            <person name="Wang W.-Y."/>
            <person name="Chen R.-S."/>
            <person name="Shen Y."/>
            <person name="Chen Z."/>
            <person name="Yuan Z.-H."/>
            <person name="Zhao G.-P."/>
            <person name="Qu D."/>
            <person name="Danchin A."/>
            <person name="Wen Y.-M."/>
        </authorList>
    </citation>
    <scope>NUCLEOTIDE SEQUENCE [LARGE SCALE GENOMIC DNA]</scope>
    <source>
        <strain>ATCC 12228 / FDA PCI 1200</strain>
    </source>
</reference>
<evidence type="ECO:0000255" key="1">
    <source>
        <dbReference type="HAMAP-Rule" id="MF_01719"/>
    </source>
</evidence>
<proteinExistence type="inferred from homology"/>
<keyword id="KW-0029">Amino-acid transport</keyword>
<keyword id="KW-0067">ATP-binding</keyword>
<keyword id="KW-1003">Cell membrane</keyword>
<keyword id="KW-0472">Membrane</keyword>
<keyword id="KW-0547">Nucleotide-binding</keyword>
<keyword id="KW-1278">Translocase</keyword>
<keyword id="KW-0813">Transport</keyword>
<organism>
    <name type="scientific">Staphylococcus epidermidis (strain ATCC 12228 / FDA PCI 1200)</name>
    <dbReference type="NCBI Taxonomy" id="176280"/>
    <lineage>
        <taxon>Bacteria</taxon>
        <taxon>Bacillati</taxon>
        <taxon>Bacillota</taxon>
        <taxon>Bacilli</taxon>
        <taxon>Bacillales</taxon>
        <taxon>Staphylococcaceae</taxon>
        <taxon>Staphylococcus</taxon>
    </lineage>
</organism>
<name>METN1_STAES</name>
<accession>Q8CTB2</accession>
<sequence length="341" mass="38442">MIKLNQIVKRYHTKDKDVLAVDHVDLNIESGSIFGVIGFSGAGKSTLIRMFNNLESPTSGEIIIDGDNISQLSKSQLRKKRQKVSMIFQHFNLLWSRNVLKNVTFPLEIAGVPSGLAKQKALELIELVGLKGRESAYPSELSGGQKQRVGIARALANDPDVLLCDEATSALDPQTTDEILDLLLKVREQQNLTIVLITHEMHVIRRMCDEVAVMENGKVIEQGAVSKVFENPQHEVTKRFVKDDLNDDFEDSLEYLEPLDHDAYIVRLNFTGENTTEPIISYMTKTHNIDVNILEADIKNTKNGSLGFLVIHIPHISEEHFKQFKHNLHEQHVNVEVLKHG</sequence>
<dbReference type="EC" id="7.4.2.11" evidence="1"/>
<dbReference type="EMBL" id="AE015929">
    <property type="protein sequence ID" value="AAO04197.1"/>
    <property type="molecule type" value="Genomic_DNA"/>
</dbReference>
<dbReference type="RefSeq" id="NP_764155.1">
    <property type="nucleotide sequence ID" value="NC_004461.1"/>
</dbReference>
<dbReference type="RefSeq" id="WP_011082631.1">
    <property type="nucleotide sequence ID" value="NC_004461.1"/>
</dbReference>
<dbReference type="SMR" id="Q8CTB2"/>
<dbReference type="KEGG" id="sep:SE_0600"/>
<dbReference type="PATRIC" id="fig|176280.10.peg.571"/>
<dbReference type="eggNOG" id="COG1135">
    <property type="taxonomic scope" value="Bacteria"/>
</dbReference>
<dbReference type="HOGENOM" id="CLU_000604_1_3_9"/>
<dbReference type="OrthoDB" id="9802264at2"/>
<dbReference type="Proteomes" id="UP000001411">
    <property type="component" value="Chromosome"/>
</dbReference>
<dbReference type="GO" id="GO:0005886">
    <property type="term" value="C:plasma membrane"/>
    <property type="evidence" value="ECO:0007669"/>
    <property type="project" value="UniProtKB-SubCell"/>
</dbReference>
<dbReference type="GO" id="GO:0033232">
    <property type="term" value="F:ABC-type D-methionine transporter activity"/>
    <property type="evidence" value="ECO:0007669"/>
    <property type="project" value="UniProtKB-EC"/>
</dbReference>
<dbReference type="GO" id="GO:0005524">
    <property type="term" value="F:ATP binding"/>
    <property type="evidence" value="ECO:0007669"/>
    <property type="project" value="UniProtKB-KW"/>
</dbReference>
<dbReference type="GO" id="GO:0016887">
    <property type="term" value="F:ATP hydrolysis activity"/>
    <property type="evidence" value="ECO:0007669"/>
    <property type="project" value="InterPro"/>
</dbReference>
<dbReference type="CDD" id="cd03258">
    <property type="entry name" value="ABC_MetN_methionine_transporter"/>
    <property type="match status" value="1"/>
</dbReference>
<dbReference type="FunFam" id="3.40.50.300:FF:000056">
    <property type="entry name" value="Cell division ATP-binding protein FtsE"/>
    <property type="match status" value="1"/>
</dbReference>
<dbReference type="Gene3D" id="3.30.70.260">
    <property type="match status" value="1"/>
</dbReference>
<dbReference type="Gene3D" id="3.40.50.300">
    <property type="entry name" value="P-loop containing nucleotide triphosphate hydrolases"/>
    <property type="match status" value="1"/>
</dbReference>
<dbReference type="InterPro" id="IPR003593">
    <property type="entry name" value="AAA+_ATPase"/>
</dbReference>
<dbReference type="InterPro" id="IPR003439">
    <property type="entry name" value="ABC_transporter-like_ATP-bd"/>
</dbReference>
<dbReference type="InterPro" id="IPR017871">
    <property type="entry name" value="ABC_transporter-like_CS"/>
</dbReference>
<dbReference type="InterPro" id="IPR045865">
    <property type="entry name" value="ACT-like_dom_sf"/>
</dbReference>
<dbReference type="InterPro" id="IPR041701">
    <property type="entry name" value="MetN_ABC"/>
</dbReference>
<dbReference type="InterPro" id="IPR050086">
    <property type="entry name" value="MetN_ABC_transporter-like"/>
</dbReference>
<dbReference type="InterPro" id="IPR018449">
    <property type="entry name" value="NIL_domain"/>
</dbReference>
<dbReference type="InterPro" id="IPR027417">
    <property type="entry name" value="P-loop_NTPase"/>
</dbReference>
<dbReference type="PANTHER" id="PTHR43166">
    <property type="entry name" value="AMINO ACID IMPORT ATP-BINDING PROTEIN"/>
    <property type="match status" value="1"/>
</dbReference>
<dbReference type="PANTHER" id="PTHR43166:SF36">
    <property type="entry name" value="METHIONINE IMPORT ATP-BINDING PROTEIN METN 2"/>
    <property type="match status" value="1"/>
</dbReference>
<dbReference type="Pfam" id="PF00005">
    <property type="entry name" value="ABC_tran"/>
    <property type="match status" value="1"/>
</dbReference>
<dbReference type="Pfam" id="PF09383">
    <property type="entry name" value="NIL"/>
    <property type="match status" value="1"/>
</dbReference>
<dbReference type="SMART" id="SM00382">
    <property type="entry name" value="AAA"/>
    <property type="match status" value="1"/>
</dbReference>
<dbReference type="SMART" id="SM00930">
    <property type="entry name" value="NIL"/>
    <property type="match status" value="1"/>
</dbReference>
<dbReference type="SUPFAM" id="SSF55021">
    <property type="entry name" value="ACT-like"/>
    <property type="match status" value="1"/>
</dbReference>
<dbReference type="SUPFAM" id="SSF52540">
    <property type="entry name" value="P-loop containing nucleoside triphosphate hydrolases"/>
    <property type="match status" value="1"/>
</dbReference>
<dbReference type="PROSITE" id="PS00211">
    <property type="entry name" value="ABC_TRANSPORTER_1"/>
    <property type="match status" value="1"/>
</dbReference>
<dbReference type="PROSITE" id="PS50893">
    <property type="entry name" value="ABC_TRANSPORTER_2"/>
    <property type="match status" value="1"/>
</dbReference>
<dbReference type="PROSITE" id="PS51264">
    <property type="entry name" value="METN"/>
    <property type="match status" value="1"/>
</dbReference>